<reference key="1">
    <citation type="submission" date="2009-06" db="EMBL/GenBank/DDBJ databases">
        <title>Complete sequence of chromosome of Geopacillus sp. WCH70.</title>
        <authorList>
            <consortium name="US DOE Joint Genome Institute"/>
            <person name="Lucas S."/>
            <person name="Copeland A."/>
            <person name="Lapidus A."/>
            <person name="Glavina del Rio T."/>
            <person name="Dalin E."/>
            <person name="Tice H."/>
            <person name="Bruce D."/>
            <person name="Goodwin L."/>
            <person name="Pitluck S."/>
            <person name="Chertkov O."/>
            <person name="Brettin T."/>
            <person name="Detter J.C."/>
            <person name="Han C."/>
            <person name="Larimer F."/>
            <person name="Land M."/>
            <person name="Hauser L."/>
            <person name="Kyrpides N."/>
            <person name="Mikhailova N."/>
            <person name="Brumm P."/>
            <person name="Mead D.A."/>
            <person name="Richardson P."/>
        </authorList>
    </citation>
    <scope>NUCLEOTIDE SEQUENCE [LARGE SCALE GENOMIC DNA]</scope>
    <source>
        <strain>WCH70</strain>
    </source>
</reference>
<protein>
    <recommendedName>
        <fullName evidence="1">Imidazoleglycerol-phosphate dehydratase</fullName>
        <shortName evidence="1">IGPD</shortName>
        <ecNumber evidence="1">4.2.1.19</ecNumber>
    </recommendedName>
</protein>
<proteinExistence type="inferred from homology"/>
<keyword id="KW-0028">Amino-acid biosynthesis</keyword>
<keyword id="KW-0963">Cytoplasm</keyword>
<keyword id="KW-0368">Histidine biosynthesis</keyword>
<keyword id="KW-0456">Lyase</keyword>
<name>HIS7_GEOSW</name>
<comment type="catalytic activity">
    <reaction evidence="1">
        <text>D-erythro-1-(imidazol-4-yl)glycerol 3-phosphate = 3-(imidazol-4-yl)-2-oxopropyl phosphate + H2O</text>
        <dbReference type="Rhea" id="RHEA:11040"/>
        <dbReference type="ChEBI" id="CHEBI:15377"/>
        <dbReference type="ChEBI" id="CHEBI:57766"/>
        <dbReference type="ChEBI" id="CHEBI:58278"/>
        <dbReference type="EC" id="4.2.1.19"/>
    </reaction>
</comment>
<comment type="pathway">
    <text evidence="1">Amino-acid biosynthesis; L-histidine biosynthesis; L-histidine from 5-phospho-alpha-D-ribose 1-diphosphate: step 6/9.</text>
</comment>
<comment type="subcellular location">
    <subcellularLocation>
        <location evidence="1">Cytoplasm</location>
    </subcellularLocation>
</comment>
<comment type="similarity">
    <text evidence="1">Belongs to the imidazoleglycerol-phosphate dehydratase family.</text>
</comment>
<organism>
    <name type="scientific">Geobacillus sp. (strain WCH70)</name>
    <dbReference type="NCBI Taxonomy" id="471223"/>
    <lineage>
        <taxon>Bacteria</taxon>
        <taxon>Bacillati</taxon>
        <taxon>Bacillota</taxon>
        <taxon>Bacilli</taxon>
        <taxon>Bacillales</taxon>
        <taxon>Anoxybacillaceae</taxon>
        <taxon>Geobacillus</taxon>
    </lineage>
</organism>
<accession>C5D7P1</accession>
<dbReference type="EC" id="4.2.1.19" evidence="1"/>
<dbReference type="EMBL" id="CP001638">
    <property type="protein sequence ID" value="ACS25651.1"/>
    <property type="molecule type" value="Genomic_DNA"/>
</dbReference>
<dbReference type="SMR" id="C5D7P1"/>
<dbReference type="STRING" id="471223.GWCH70_2978"/>
<dbReference type="KEGG" id="gwc:GWCH70_2978"/>
<dbReference type="eggNOG" id="COG0131">
    <property type="taxonomic scope" value="Bacteria"/>
</dbReference>
<dbReference type="HOGENOM" id="CLU_044308_2_0_9"/>
<dbReference type="OrthoDB" id="9790411at2"/>
<dbReference type="UniPathway" id="UPA00031">
    <property type="reaction ID" value="UER00011"/>
</dbReference>
<dbReference type="GO" id="GO:0005737">
    <property type="term" value="C:cytoplasm"/>
    <property type="evidence" value="ECO:0007669"/>
    <property type="project" value="UniProtKB-SubCell"/>
</dbReference>
<dbReference type="GO" id="GO:0004424">
    <property type="term" value="F:imidazoleglycerol-phosphate dehydratase activity"/>
    <property type="evidence" value="ECO:0007669"/>
    <property type="project" value="UniProtKB-UniRule"/>
</dbReference>
<dbReference type="GO" id="GO:0000105">
    <property type="term" value="P:L-histidine biosynthetic process"/>
    <property type="evidence" value="ECO:0007669"/>
    <property type="project" value="UniProtKB-UniRule"/>
</dbReference>
<dbReference type="CDD" id="cd07914">
    <property type="entry name" value="IGPD"/>
    <property type="match status" value="1"/>
</dbReference>
<dbReference type="FunFam" id="3.30.230.40:FF:000001">
    <property type="entry name" value="Imidazoleglycerol-phosphate dehydratase HisB"/>
    <property type="match status" value="1"/>
</dbReference>
<dbReference type="FunFam" id="3.30.230.40:FF:000003">
    <property type="entry name" value="Imidazoleglycerol-phosphate dehydratase HisB"/>
    <property type="match status" value="1"/>
</dbReference>
<dbReference type="Gene3D" id="3.30.230.40">
    <property type="entry name" value="Imidazole glycerol phosphate dehydratase, domain 1"/>
    <property type="match status" value="2"/>
</dbReference>
<dbReference type="HAMAP" id="MF_00076">
    <property type="entry name" value="HisB"/>
    <property type="match status" value="1"/>
</dbReference>
<dbReference type="InterPro" id="IPR038494">
    <property type="entry name" value="IGPD_sf"/>
</dbReference>
<dbReference type="InterPro" id="IPR000807">
    <property type="entry name" value="ImidazoleglycerolP_deHydtase"/>
</dbReference>
<dbReference type="InterPro" id="IPR020565">
    <property type="entry name" value="ImidazoleglycerP_deHydtase_CS"/>
</dbReference>
<dbReference type="InterPro" id="IPR020568">
    <property type="entry name" value="Ribosomal_Su5_D2-typ_SF"/>
</dbReference>
<dbReference type="NCBIfam" id="NF002111">
    <property type="entry name" value="PRK00951.2-1"/>
    <property type="match status" value="1"/>
</dbReference>
<dbReference type="NCBIfam" id="NF002114">
    <property type="entry name" value="PRK00951.2-4"/>
    <property type="match status" value="1"/>
</dbReference>
<dbReference type="NCBIfam" id="NF002115">
    <property type="entry name" value="PRK00951.2-5"/>
    <property type="match status" value="1"/>
</dbReference>
<dbReference type="NCBIfam" id="NF002116">
    <property type="entry name" value="PRK00951.2-6"/>
    <property type="match status" value="1"/>
</dbReference>
<dbReference type="PANTHER" id="PTHR23133:SF2">
    <property type="entry name" value="IMIDAZOLEGLYCEROL-PHOSPHATE DEHYDRATASE"/>
    <property type="match status" value="1"/>
</dbReference>
<dbReference type="PANTHER" id="PTHR23133">
    <property type="entry name" value="IMIDAZOLEGLYCEROL-PHOSPHATE DEHYDRATASE HIS7"/>
    <property type="match status" value="1"/>
</dbReference>
<dbReference type="Pfam" id="PF00475">
    <property type="entry name" value="IGPD"/>
    <property type="match status" value="1"/>
</dbReference>
<dbReference type="SUPFAM" id="SSF54211">
    <property type="entry name" value="Ribosomal protein S5 domain 2-like"/>
    <property type="match status" value="2"/>
</dbReference>
<dbReference type="PROSITE" id="PS00954">
    <property type="entry name" value="IGP_DEHYDRATASE_1"/>
    <property type="match status" value="1"/>
</dbReference>
<dbReference type="PROSITE" id="PS00955">
    <property type="entry name" value="IGP_DEHYDRATASE_2"/>
    <property type="match status" value="1"/>
</dbReference>
<gene>
    <name evidence="1" type="primary">hisB</name>
    <name type="ordered locus">GWCH70_2978</name>
</gene>
<sequence length="195" mass="21849">MVRHASISRTTKETDIQLQFVIDGEGKAELDTGVPFLTHMLDLFTKHGQFNLTVTAKGDTEVDDHHTTEDIGICLGQALREALGDKKGIKRYGNAFVPMDEALAQVIVDLSNRPHFEFRGEFPSEKVGTFDVELVHEFLWKLALEARMNLHVIVHYGRNTHHMIEAVFKALGRALDEATMIDPRVKGVPSTKGML</sequence>
<feature type="chain" id="PRO_1000202514" description="Imidazoleglycerol-phosphate dehydratase">
    <location>
        <begin position="1"/>
        <end position="195"/>
    </location>
</feature>
<evidence type="ECO:0000255" key="1">
    <source>
        <dbReference type="HAMAP-Rule" id="MF_00076"/>
    </source>
</evidence>